<dbReference type="EC" id="6.3.5.3" evidence="1"/>
<dbReference type="EMBL" id="CP001074">
    <property type="protein sequence ID" value="ACE91350.1"/>
    <property type="molecule type" value="Genomic_DNA"/>
</dbReference>
<dbReference type="SMR" id="B3PPS1"/>
<dbReference type="KEGG" id="rec:RHECIAT_CH0002396"/>
<dbReference type="eggNOG" id="COG0046">
    <property type="taxonomic scope" value="Bacteria"/>
</dbReference>
<dbReference type="HOGENOM" id="CLU_003100_0_1_5"/>
<dbReference type="UniPathway" id="UPA00074">
    <property type="reaction ID" value="UER00128"/>
</dbReference>
<dbReference type="Proteomes" id="UP000008817">
    <property type="component" value="Chromosome"/>
</dbReference>
<dbReference type="GO" id="GO:0005737">
    <property type="term" value="C:cytoplasm"/>
    <property type="evidence" value="ECO:0007669"/>
    <property type="project" value="UniProtKB-SubCell"/>
</dbReference>
<dbReference type="GO" id="GO:0005524">
    <property type="term" value="F:ATP binding"/>
    <property type="evidence" value="ECO:0007669"/>
    <property type="project" value="UniProtKB-UniRule"/>
</dbReference>
<dbReference type="GO" id="GO:0000287">
    <property type="term" value="F:magnesium ion binding"/>
    <property type="evidence" value="ECO:0007669"/>
    <property type="project" value="UniProtKB-UniRule"/>
</dbReference>
<dbReference type="GO" id="GO:0004642">
    <property type="term" value="F:phosphoribosylformylglycinamidine synthase activity"/>
    <property type="evidence" value="ECO:0007669"/>
    <property type="project" value="UniProtKB-UniRule"/>
</dbReference>
<dbReference type="GO" id="GO:0006189">
    <property type="term" value="P:'de novo' IMP biosynthetic process"/>
    <property type="evidence" value="ECO:0007669"/>
    <property type="project" value="UniProtKB-UniRule"/>
</dbReference>
<dbReference type="CDD" id="cd02203">
    <property type="entry name" value="PurL_repeat1"/>
    <property type="match status" value="1"/>
</dbReference>
<dbReference type="CDD" id="cd02204">
    <property type="entry name" value="PurL_repeat2"/>
    <property type="match status" value="1"/>
</dbReference>
<dbReference type="FunFam" id="3.30.1330.10:FF:000004">
    <property type="entry name" value="Phosphoribosylformylglycinamidine synthase subunit PurL"/>
    <property type="match status" value="1"/>
</dbReference>
<dbReference type="Gene3D" id="3.90.650.10">
    <property type="entry name" value="PurM-like C-terminal domain"/>
    <property type="match status" value="2"/>
</dbReference>
<dbReference type="Gene3D" id="3.30.1330.10">
    <property type="entry name" value="PurM-like, N-terminal domain"/>
    <property type="match status" value="2"/>
</dbReference>
<dbReference type="HAMAP" id="MF_00420">
    <property type="entry name" value="PurL_2"/>
    <property type="match status" value="1"/>
</dbReference>
<dbReference type="InterPro" id="IPR010074">
    <property type="entry name" value="PRibForGlyAmidine_synth_PurL"/>
</dbReference>
<dbReference type="InterPro" id="IPR041609">
    <property type="entry name" value="PurL_linker"/>
</dbReference>
<dbReference type="InterPro" id="IPR010918">
    <property type="entry name" value="PurM-like_C_dom"/>
</dbReference>
<dbReference type="InterPro" id="IPR036676">
    <property type="entry name" value="PurM-like_C_sf"/>
</dbReference>
<dbReference type="InterPro" id="IPR016188">
    <property type="entry name" value="PurM-like_N"/>
</dbReference>
<dbReference type="InterPro" id="IPR036921">
    <property type="entry name" value="PurM-like_N_sf"/>
</dbReference>
<dbReference type="NCBIfam" id="TIGR01736">
    <property type="entry name" value="FGAM_synth_II"/>
    <property type="match status" value="1"/>
</dbReference>
<dbReference type="NCBIfam" id="NF002290">
    <property type="entry name" value="PRK01213.1"/>
    <property type="match status" value="1"/>
</dbReference>
<dbReference type="PANTHER" id="PTHR43555">
    <property type="entry name" value="PHOSPHORIBOSYLFORMYLGLYCINAMIDINE SYNTHASE SUBUNIT PURL"/>
    <property type="match status" value="1"/>
</dbReference>
<dbReference type="PANTHER" id="PTHR43555:SF1">
    <property type="entry name" value="PHOSPHORIBOSYLFORMYLGLYCINAMIDINE SYNTHASE SUBUNIT PURL"/>
    <property type="match status" value="1"/>
</dbReference>
<dbReference type="Pfam" id="PF00586">
    <property type="entry name" value="AIRS"/>
    <property type="match status" value="2"/>
</dbReference>
<dbReference type="Pfam" id="PF02769">
    <property type="entry name" value="AIRS_C"/>
    <property type="match status" value="2"/>
</dbReference>
<dbReference type="Pfam" id="PF18072">
    <property type="entry name" value="FGAR-AT_linker"/>
    <property type="match status" value="1"/>
</dbReference>
<dbReference type="PIRSF" id="PIRSF001587">
    <property type="entry name" value="FGAM_synthase_II"/>
    <property type="match status" value="1"/>
</dbReference>
<dbReference type="SUPFAM" id="SSF56042">
    <property type="entry name" value="PurM C-terminal domain-like"/>
    <property type="match status" value="2"/>
</dbReference>
<dbReference type="SUPFAM" id="SSF55326">
    <property type="entry name" value="PurM N-terminal domain-like"/>
    <property type="match status" value="2"/>
</dbReference>
<keyword id="KW-0067">ATP-binding</keyword>
<keyword id="KW-0963">Cytoplasm</keyword>
<keyword id="KW-0436">Ligase</keyword>
<keyword id="KW-0460">Magnesium</keyword>
<keyword id="KW-0479">Metal-binding</keyword>
<keyword id="KW-0547">Nucleotide-binding</keyword>
<keyword id="KW-0658">Purine biosynthesis</keyword>
<accession>B3PPS1</accession>
<comment type="function">
    <text evidence="1">Part of the phosphoribosylformylglycinamidine synthase complex involved in the purines biosynthetic pathway. Catalyzes the ATP-dependent conversion of formylglycinamide ribonucleotide (FGAR) and glutamine to yield formylglycinamidine ribonucleotide (FGAM) and glutamate. The FGAM synthase complex is composed of three subunits. PurQ produces an ammonia molecule by converting glutamine to glutamate. PurL transfers the ammonia molecule to FGAR to form FGAM in an ATP-dependent manner. PurS interacts with PurQ and PurL and is thought to assist in the transfer of the ammonia molecule from PurQ to PurL.</text>
</comment>
<comment type="catalytic activity">
    <reaction evidence="1">
        <text>N(2)-formyl-N(1)-(5-phospho-beta-D-ribosyl)glycinamide + L-glutamine + ATP + H2O = 2-formamido-N(1)-(5-O-phospho-beta-D-ribosyl)acetamidine + L-glutamate + ADP + phosphate + H(+)</text>
        <dbReference type="Rhea" id="RHEA:17129"/>
        <dbReference type="ChEBI" id="CHEBI:15377"/>
        <dbReference type="ChEBI" id="CHEBI:15378"/>
        <dbReference type="ChEBI" id="CHEBI:29985"/>
        <dbReference type="ChEBI" id="CHEBI:30616"/>
        <dbReference type="ChEBI" id="CHEBI:43474"/>
        <dbReference type="ChEBI" id="CHEBI:58359"/>
        <dbReference type="ChEBI" id="CHEBI:147286"/>
        <dbReference type="ChEBI" id="CHEBI:147287"/>
        <dbReference type="ChEBI" id="CHEBI:456216"/>
        <dbReference type="EC" id="6.3.5.3"/>
    </reaction>
</comment>
<comment type="pathway">
    <text evidence="1">Purine metabolism; IMP biosynthesis via de novo pathway; 5-amino-1-(5-phospho-D-ribosyl)imidazole from N(2)-formyl-N(1)-(5-phospho-D-ribosyl)glycinamide: step 1/2.</text>
</comment>
<comment type="subunit">
    <text evidence="1">Monomer. Part of the FGAM synthase complex composed of 1 PurL, 1 PurQ and 2 PurS subunits.</text>
</comment>
<comment type="subcellular location">
    <subcellularLocation>
        <location evidence="1">Cytoplasm</location>
    </subcellularLocation>
</comment>
<comment type="similarity">
    <text evidence="1">Belongs to the FGAMS family.</text>
</comment>
<sequence>MTIPNTIPITPELIAGHGLKPDEYQRILDLIGREPTFTELGIFSAMWNEHCSYKSSKKWLRTLPTKGPRVIQGPGENAGVVDIDDGDCVVFKMESHNHPSYIEPYQGAATGVGGILRDVFTMGARPIAAMNALRFGEPDHPKTRHLVSGVVSGVGGYGNSFGVPTVGGEVEFDARYNGNILVNAFAAGIAKSNAIFLSEAKGVGLPVVYLGAKTGRDGVGGATMASAEFDESIEEKRPTVQVGDPFTEKCLLEACLELMQTGAVIAIQDMGAAGLTCSAVEMGAKGDLGILLELDKVPVREERMTAYEMMLSESQERMLMVLQPEKEEQAKAIFVKWGLDFAIVGKTTDDLRFRVVHQGEEVANLPIKDLGDQAPEYDRPWRESGKPAPLPANLVAAPKNYGQALLQLVGSANQSSRRWVYEQYDTLIQGNSLQLPGGDAGVVRVDGHKSKALAFSSDVTPRYVEADPFEGGKQAVAECWRNITATGAEPLAATDNLNFGNPEKPEIMGQFVQAVKGIGEACRALDFPIVSGNVSLYNETNGVAILPTPTIAGVGLLPDWSKMARIGSANDGDKVIMIGLDGSHLGQSVYLRDVLDSREGPAPEVDLFAERRNGDFVRSVIRNDQATACHDISSGGLAVALAEMAMASGKGLTIDLGECKGAPHALLFGEDQARYVLTVPADVADFVCVNAEGAGVPFRRLGTVGGDALVVDDLITLPIQQLRDTHESWFPDFMEGRGELAAE</sequence>
<evidence type="ECO:0000255" key="1">
    <source>
        <dbReference type="HAMAP-Rule" id="MF_00420"/>
    </source>
</evidence>
<reference key="1">
    <citation type="journal article" date="2010" name="Appl. Environ. Microbiol.">
        <title>Conserved symbiotic plasmid DNA sequences in the multireplicon pangenomic structure of Rhizobium etli.</title>
        <authorList>
            <person name="Gonzalez V."/>
            <person name="Acosta J.L."/>
            <person name="Santamaria R.I."/>
            <person name="Bustos P."/>
            <person name="Fernandez J.L."/>
            <person name="Hernandez Gonzalez I.L."/>
            <person name="Diaz R."/>
            <person name="Flores M."/>
            <person name="Palacios R."/>
            <person name="Mora J."/>
            <person name="Davila G."/>
        </authorList>
    </citation>
    <scope>NUCLEOTIDE SEQUENCE [LARGE SCALE GENOMIC DNA]</scope>
    <source>
        <strain>CIAT 652</strain>
    </source>
</reference>
<organism>
    <name type="scientific">Rhizobium etli (strain CIAT 652)</name>
    <dbReference type="NCBI Taxonomy" id="491916"/>
    <lineage>
        <taxon>Bacteria</taxon>
        <taxon>Pseudomonadati</taxon>
        <taxon>Pseudomonadota</taxon>
        <taxon>Alphaproteobacteria</taxon>
        <taxon>Hyphomicrobiales</taxon>
        <taxon>Rhizobiaceae</taxon>
        <taxon>Rhizobium/Agrobacterium group</taxon>
        <taxon>Rhizobium</taxon>
    </lineage>
</organism>
<protein>
    <recommendedName>
        <fullName evidence="1">Phosphoribosylformylglycinamidine synthase subunit PurL</fullName>
        <shortName evidence="1">FGAM synthase</shortName>
        <ecNumber evidence="1">6.3.5.3</ecNumber>
    </recommendedName>
    <alternativeName>
        <fullName evidence="1">Formylglycinamide ribonucleotide amidotransferase subunit II</fullName>
        <shortName evidence="1">FGAR amidotransferase II</shortName>
        <shortName evidence="1">FGAR-AT II</shortName>
    </alternativeName>
    <alternativeName>
        <fullName evidence="1">Glutamine amidotransferase PurL</fullName>
    </alternativeName>
    <alternativeName>
        <fullName evidence="1">Phosphoribosylformylglycinamidine synthase subunit II</fullName>
    </alternativeName>
</protein>
<feature type="chain" id="PRO_1000194832" description="Phosphoribosylformylglycinamidine synthase subunit PurL">
    <location>
        <begin position="1"/>
        <end position="743"/>
    </location>
</feature>
<feature type="active site" evidence="1">
    <location>
        <position position="50"/>
    </location>
</feature>
<feature type="active site" description="Proton acceptor" evidence="1">
    <location>
        <position position="96"/>
    </location>
</feature>
<feature type="binding site" evidence="1">
    <location>
        <position position="53"/>
    </location>
    <ligand>
        <name>ATP</name>
        <dbReference type="ChEBI" id="CHEBI:30616"/>
    </ligand>
</feature>
<feature type="binding site" evidence="1">
    <location>
        <position position="92"/>
    </location>
    <ligand>
        <name>ATP</name>
        <dbReference type="ChEBI" id="CHEBI:30616"/>
    </ligand>
</feature>
<feature type="binding site" evidence="1">
    <location>
        <position position="94"/>
    </location>
    <ligand>
        <name>Mg(2+)</name>
        <dbReference type="ChEBI" id="CHEBI:18420"/>
        <label>1</label>
    </ligand>
</feature>
<feature type="binding site" evidence="1">
    <location>
        <begin position="95"/>
        <end position="98"/>
    </location>
    <ligand>
        <name>substrate</name>
    </ligand>
</feature>
<feature type="binding site" evidence="1">
    <location>
        <position position="117"/>
    </location>
    <ligand>
        <name>substrate</name>
    </ligand>
</feature>
<feature type="binding site" evidence="1">
    <location>
        <position position="118"/>
    </location>
    <ligand>
        <name>Mg(2+)</name>
        <dbReference type="ChEBI" id="CHEBI:18420"/>
        <label>2</label>
    </ligand>
</feature>
<feature type="binding site" evidence="1">
    <location>
        <position position="241"/>
    </location>
    <ligand>
        <name>substrate</name>
    </ligand>
</feature>
<feature type="binding site" evidence="1">
    <location>
        <position position="269"/>
    </location>
    <ligand>
        <name>Mg(2+)</name>
        <dbReference type="ChEBI" id="CHEBI:18420"/>
        <label>2</label>
    </ligand>
</feature>
<feature type="binding site" evidence="1">
    <location>
        <begin position="313"/>
        <end position="315"/>
    </location>
    <ligand>
        <name>substrate</name>
    </ligand>
</feature>
<feature type="binding site" evidence="1">
    <location>
        <position position="495"/>
    </location>
    <ligand>
        <name>ATP</name>
        <dbReference type="ChEBI" id="CHEBI:30616"/>
    </ligand>
</feature>
<feature type="binding site" evidence="1">
    <location>
        <position position="532"/>
    </location>
    <ligand>
        <name>ATP</name>
        <dbReference type="ChEBI" id="CHEBI:30616"/>
    </ligand>
</feature>
<feature type="binding site" evidence="1">
    <location>
        <position position="533"/>
    </location>
    <ligand>
        <name>Mg(2+)</name>
        <dbReference type="ChEBI" id="CHEBI:18420"/>
        <label>1</label>
    </ligand>
</feature>
<feature type="binding site" evidence="1">
    <location>
        <position position="535"/>
    </location>
    <ligand>
        <name>substrate</name>
    </ligand>
</feature>
<gene>
    <name evidence="1" type="primary">purL</name>
    <name type="ordered locus">RHECIAT_CH0002396</name>
</gene>
<proteinExistence type="inferred from homology"/>
<name>PURL_RHIE6</name>